<name>ASPR_HEDJA</name>
<keyword id="KW-0903">Direct protein sequencing</keyword>
<keyword id="KW-1206">Fibrinogenolytic toxin</keyword>
<keyword id="KW-1205">Fibrinolytic toxin</keyword>
<keyword id="KW-1199">Hemostasis impairing toxin</keyword>
<keyword id="KW-0378">Hydrolase</keyword>
<keyword id="KW-0645">Protease</keyword>
<keyword id="KW-0720">Serine protease</keyword>
<keyword id="KW-0800">Toxin</keyword>
<feature type="chain" id="PRO_0000409667" description="Alkaline serine protease NJP">
    <location>
        <begin position="1" status="less than"/>
        <end position="28" status="greater than"/>
    </location>
</feature>
<feature type="non-consecutive residues" evidence="2">
    <location>
        <begin position="7"/>
        <end position="8"/>
    </location>
</feature>
<feature type="non-consecutive residues" evidence="2">
    <location>
        <begin position="19"/>
        <end position="20"/>
    </location>
</feature>
<feature type="non-terminal residue" evidence="2">
    <location>
        <position position="1"/>
    </location>
</feature>
<feature type="non-terminal residue" evidence="2">
    <location>
        <position position="28"/>
    </location>
</feature>
<sequence>VTVVQYRSTNASSGYLNLRVYLLDTGLR</sequence>
<reference evidence="3" key="1">
    <citation type="journal article" date="2011" name="Comp. Biochem. Physiol.">
        <title>A novel alkaline serine protease with fibrinolytic activity from the polychaete, Neanthes japonica.</title>
        <authorList>
            <person name="Wang S."/>
            <person name="Deng Z."/>
            <person name="Li Q."/>
            <person name="Ge X."/>
            <person name="Bo Q."/>
            <person name="Liu J."/>
            <person name="Cui J."/>
            <person name="Jiang X."/>
            <person name="Liu J."/>
            <person name="Zhang L."/>
            <person name="Hong M."/>
        </authorList>
    </citation>
    <scope>PROTEIN SEQUENCE</scope>
    <scope>FUNCTION</scope>
    <scope>ACTIVITY REGULATION</scope>
    <scope>BIOPHYSICOCHEMICAL PROPERTIES</scope>
    <scope>MASS SPECTROMETRY</scope>
</reference>
<accession>P86834</accession>
<dbReference type="EC" id="3.4.21.-" evidence="1"/>
<dbReference type="GO" id="GO:0004252">
    <property type="term" value="F:serine-type endopeptidase activity"/>
    <property type="evidence" value="ECO:0000314"/>
    <property type="project" value="UniProtKB"/>
</dbReference>
<dbReference type="GO" id="GO:0090729">
    <property type="term" value="F:toxin activity"/>
    <property type="evidence" value="ECO:0007669"/>
    <property type="project" value="UniProtKB-KW"/>
</dbReference>
<dbReference type="GO" id="GO:0042730">
    <property type="term" value="P:fibrinolysis"/>
    <property type="evidence" value="ECO:0000314"/>
    <property type="project" value="UniProtKB"/>
</dbReference>
<dbReference type="GO" id="GO:0006508">
    <property type="term" value="P:proteolysis"/>
    <property type="evidence" value="ECO:0007669"/>
    <property type="project" value="UniProtKB-KW"/>
</dbReference>
<evidence type="ECO:0000269" key="1">
    <source>
    </source>
</evidence>
<evidence type="ECO:0000303" key="2">
    <source>
    </source>
</evidence>
<evidence type="ECO:0000305" key="3"/>
<comment type="function">
    <text evidence="1">Alkaline thrombin-like serine protease. Has fibrinolytic and fibrinogenolytic but not plasminogenolytic activity. Cleaves fibrinogen chains Aalpha, Bbeta and gamma chains in that order. Cleaves after Arg and Lys residues.</text>
</comment>
<comment type="activity regulation">
    <text evidence="1">Inhibited by PMSF. Not or very weakly inhibited by EDTA, EGTA, beta-mercaptoethanol, benzamidine, aprotinin, iodoacetic acid, pepstatin A and SBTI.</text>
</comment>
<comment type="biophysicochemical properties">
    <phDependence>
        <text evidence="1">Optimum pH is 9.0. Activity is stable from pH 7 to 11.</text>
    </phDependence>
    <temperatureDependence>
        <text evidence="1">Optimum temperature is 40 degrees Celsius. Activity is stable from 30 to 60 degrees Celsius and.</text>
    </temperatureDependence>
</comment>
<comment type="mass spectrometry">
    <text>The measured range is 1-?.</text>
</comment>
<comment type="miscellaneous">
    <text evidence="1">On the 2D-gel the determined pI of this protein is: 9.2, its MW is: 33.5 kDa.</text>
</comment>
<comment type="caution">
    <text evidence="1">The order of the peptides shown is unknown.</text>
</comment>
<organism>
    <name type="scientific">Hediste japonica</name>
    <name type="common">Polychaete worm</name>
    <name type="synonym">Neanthes japonica</name>
    <dbReference type="NCBI Taxonomy" id="73376"/>
    <lineage>
        <taxon>Eukaryota</taxon>
        <taxon>Metazoa</taxon>
        <taxon>Spiralia</taxon>
        <taxon>Lophotrochozoa</taxon>
        <taxon>Annelida</taxon>
        <taxon>Polychaeta</taxon>
        <taxon>Errantia</taxon>
        <taxon>Phyllodocida</taxon>
        <taxon>Nereididae</taxon>
        <taxon>Hediste</taxon>
    </lineage>
</organism>
<proteinExistence type="evidence at protein level"/>
<protein>
    <recommendedName>
        <fullName evidence="2">Alkaline serine protease NJP</fullName>
        <ecNumber evidence="1">3.4.21.-</ecNumber>
    </recommendedName>
</protein>